<gene>
    <name evidence="1" type="primary">msrB</name>
    <name type="ordered locus">ECSE_1949</name>
</gene>
<feature type="chain" id="PRO_1000145370" description="Peptide methionine sulfoxide reductase MsrB">
    <location>
        <begin position="1"/>
        <end position="137"/>
    </location>
</feature>
<feature type="domain" description="MsrB" evidence="2">
    <location>
        <begin position="7"/>
        <end position="129"/>
    </location>
</feature>
<feature type="active site" description="Nucleophile" evidence="2">
    <location>
        <position position="118"/>
    </location>
</feature>
<feature type="binding site" evidence="2">
    <location>
        <position position="46"/>
    </location>
    <ligand>
        <name>Zn(2+)</name>
        <dbReference type="ChEBI" id="CHEBI:29105"/>
    </ligand>
</feature>
<feature type="binding site" evidence="2">
    <location>
        <position position="49"/>
    </location>
    <ligand>
        <name>Zn(2+)</name>
        <dbReference type="ChEBI" id="CHEBI:29105"/>
    </ligand>
</feature>
<feature type="binding site" evidence="2">
    <location>
        <position position="95"/>
    </location>
    <ligand>
        <name>Zn(2+)</name>
        <dbReference type="ChEBI" id="CHEBI:29105"/>
    </ligand>
</feature>
<feature type="binding site" evidence="2">
    <location>
        <position position="98"/>
    </location>
    <ligand>
        <name>Zn(2+)</name>
        <dbReference type="ChEBI" id="CHEBI:29105"/>
    </ligand>
</feature>
<comment type="catalytic activity">
    <reaction evidence="1">
        <text>L-methionyl-[protein] + [thioredoxin]-disulfide + H2O = L-methionyl-(R)-S-oxide-[protein] + [thioredoxin]-dithiol</text>
        <dbReference type="Rhea" id="RHEA:24164"/>
        <dbReference type="Rhea" id="RHEA-COMP:10698"/>
        <dbReference type="Rhea" id="RHEA-COMP:10700"/>
        <dbReference type="Rhea" id="RHEA-COMP:12313"/>
        <dbReference type="Rhea" id="RHEA-COMP:12314"/>
        <dbReference type="ChEBI" id="CHEBI:15377"/>
        <dbReference type="ChEBI" id="CHEBI:16044"/>
        <dbReference type="ChEBI" id="CHEBI:29950"/>
        <dbReference type="ChEBI" id="CHEBI:45764"/>
        <dbReference type="ChEBI" id="CHEBI:50058"/>
        <dbReference type="EC" id="1.8.4.12"/>
    </reaction>
</comment>
<comment type="cofactor">
    <cofactor evidence="1">
        <name>Zn(2+)</name>
        <dbReference type="ChEBI" id="CHEBI:29105"/>
    </cofactor>
    <text evidence="1">Binds 1 zinc ion per subunit. The zinc ion is important for the structural integrity of the protein.</text>
</comment>
<comment type="similarity">
    <text evidence="1">Belongs to the MsrB Met sulfoxide reductase family.</text>
</comment>
<sequence>MANKPSAEELKKNLSEMQFYVTQNHGTEPPFTGRLLHNKRDGVYHCLICDAPLFHSQTKYDSGCGWPSFYEPVSEESIRYIKDLSHGMQRIEIRCGNCDAHLGHVFPDGPQPTGERYCVNSASLRFTDGENGEEING</sequence>
<organism>
    <name type="scientific">Escherichia coli (strain SE11)</name>
    <dbReference type="NCBI Taxonomy" id="409438"/>
    <lineage>
        <taxon>Bacteria</taxon>
        <taxon>Pseudomonadati</taxon>
        <taxon>Pseudomonadota</taxon>
        <taxon>Gammaproteobacteria</taxon>
        <taxon>Enterobacterales</taxon>
        <taxon>Enterobacteriaceae</taxon>
        <taxon>Escherichia</taxon>
    </lineage>
</organism>
<accession>B6IBJ9</accession>
<proteinExistence type="inferred from homology"/>
<name>MSRB_ECOSE</name>
<reference key="1">
    <citation type="journal article" date="2008" name="DNA Res.">
        <title>Complete genome sequence and comparative analysis of the wild-type commensal Escherichia coli strain SE11 isolated from a healthy adult.</title>
        <authorList>
            <person name="Oshima K."/>
            <person name="Toh H."/>
            <person name="Ogura Y."/>
            <person name="Sasamoto H."/>
            <person name="Morita H."/>
            <person name="Park S.-H."/>
            <person name="Ooka T."/>
            <person name="Iyoda S."/>
            <person name="Taylor T.D."/>
            <person name="Hayashi T."/>
            <person name="Itoh K."/>
            <person name="Hattori M."/>
        </authorList>
    </citation>
    <scope>NUCLEOTIDE SEQUENCE [LARGE SCALE GENOMIC DNA]</scope>
    <source>
        <strain>SE11</strain>
    </source>
</reference>
<dbReference type="EC" id="1.8.4.12" evidence="1"/>
<dbReference type="EMBL" id="AP009240">
    <property type="protein sequence ID" value="BAG77473.1"/>
    <property type="molecule type" value="Genomic_DNA"/>
</dbReference>
<dbReference type="RefSeq" id="WP_001284618.1">
    <property type="nucleotide sequence ID" value="NC_011415.1"/>
</dbReference>
<dbReference type="SMR" id="B6IBJ9"/>
<dbReference type="GeneID" id="93775987"/>
<dbReference type="KEGG" id="ecy:ECSE_1949"/>
<dbReference type="HOGENOM" id="CLU_031040_8_5_6"/>
<dbReference type="Proteomes" id="UP000008199">
    <property type="component" value="Chromosome"/>
</dbReference>
<dbReference type="GO" id="GO:0005737">
    <property type="term" value="C:cytoplasm"/>
    <property type="evidence" value="ECO:0007669"/>
    <property type="project" value="TreeGrafter"/>
</dbReference>
<dbReference type="GO" id="GO:0033743">
    <property type="term" value="F:peptide-methionine (R)-S-oxide reductase activity"/>
    <property type="evidence" value="ECO:0007669"/>
    <property type="project" value="UniProtKB-UniRule"/>
</dbReference>
<dbReference type="GO" id="GO:0008270">
    <property type="term" value="F:zinc ion binding"/>
    <property type="evidence" value="ECO:0007669"/>
    <property type="project" value="UniProtKB-UniRule"/>
</dbReference>
<dbReference type="GO" id="GO:0030091">
    <property type="term" value="P:protein repair"/>
    <property type="evidence" value="ECO:0007669"/>
    <property type="project" value="InterPro"/>
</dbReference>
<dbReference type="GO" id="GO:0006979">
    <property type="term" value="P:response to oxidative stress"/>
    <property type="evidence" value="ECO:0007669"/>
    <property type="project" value="InterPro"/>
</dbReference>
<dbReference type="FunFam" id="2.170.150.20:FF:000001">
    <property type="entry name" value="Peptide methionine sulfoxide reductase MsrB"/>
    <property type="match status" value="1"/>
</dbReference>
<dbReference type="Gene3D" id="2.170.150.20">
    <property type="entry name" value="Peptide methionine sulfoxide reductase"/>
    <property type="match status" value="1"/>
</dbReference>
<dbReference type="HAMAP" id="MF_01400">
    <property type="entry name" value="MsrB"/>
    <property type="match status" value="1"/>
</dbReference>
<dbReference type="InterPro" id="IPR028427">
    <property type="entry name" value="Met_Sox_Rdtase_MsrB"/>
</dbReference>
<dbReference type="InterPro" id="IPR002579">
    <property type="entry name" value="Met_Sox_Rdtase_MsrB_dom"/>
</dbReference>
<dbReference type="InterPro" id="IPR011057">
    <property type="entry name" value="Mss4-like_sf"/>
</dbReference>
<dbReference type="NCBIfam" id="TIGR00357">
    <property type="entry name" value="peptide-methionine (R)-S-oxide reductase MsrB"/>
    <property type="match status" value="1"/>
</dbReference>
<dbReference type="PANTHER" id="PTHR10173">
    <property type="entry name" value="METHIONINE SULFOXIDE REDUCTASE"/>
    <property type="match status" value="1"/>
</dbReference>
<dbReference type="PANTHER" id="PTHR10173:SF52">
    <property type="entry name" value="METHIONINE-R-SULFOXIDE REDUCTASE B1"/>
    <property type="match status" value="1"/>
</dbReference>
<dbReference type="Pfam" id="PF01641">
    <property type="entry name" value="SelR"/>
    <property type="match status" value="1"/>
</dbReference>
<dbReference type="SUPFAM" id="SSF51316">
    <property type="entry name" value="Mss4-like"/>
    <property type="match status" value="1"/>
</dbReference>
<dbReference type="PROSITE" id="PS51790">
    <property type="entry name" value="MSRB"/>
    <property type="match status" value="1"/>
</dbReference>
<protein>
    <recommendedName>
        <fullName evidence="1">Peptide methionine sulfoxide reductase MsrB</fullName>
        <ecNumber evidence="1">1.8.4.12</ecNumber>
    </recommendedName>
    <alternativeName>
        <fullName evidence="1">Peptide-methionine (R)-S-oxide reductase</fullName>
    </alternativeName>
</protein>
<evidence type="ECO:0000255" key="1">
    <source>
        <dbReference type="HAMAP-Rule" id="MF_01400"/>
    </source>
</evidence>
<evidence type="ECO:0000255" key="2">
    <source>
        <dbReference type="PROSITE-ProRule" id="PRU01126"/>
    </source>
</evidence>
<keyword id="KW-0479">Metal-binding</keyword>
<keyword id="KW-0560">Oxidoreductase</keyword>
<keyword id="KW-0862">Zinc</keyword>